<proteinExistence type="evidence at protein level"/>
<reference key="1">
    <citation type="journal article" date="2012" name="PLoS ONE">
        <title>Evolution of Burkholderia pseudomallei in recurrent melioidosis.</title>
        <authorList>
            <person name="Hayden H.S."/>
            <person name="Lim R."/>
            <person name="Brittnacher M.J."/>
            <person name="Sims E.H."/>
            <person name="Ramage E.R."/>
            <person name="Fong C."/>
            <person name="Wu Z."/>
            <person name="Crist E."/>
            <person name="Chang J."/>
            <person name="Zhou Y."/>
            <person name="Radey M."/>
            <person name="Rohmer L."/>
            <person name="Haugen E."/>
            <person name="Gillett W."/>
            <person name="Wuthiekanun V."/>
            <person name="Peacock S.J."/>
            <person name="Kaul R."/>
            <person name="Miller S.I."/>
            <person name="Manoil C."/>
            <person name="Jacobs M.A."/>
        </authorList>
    </citation>
    <scope>NUCLEOTIDE SEQUENCE [LARGE SCALE GENOMIC DNA]</scope>
    <source>
        <strain>1026b</strain>
    </source>
</reference>
<reference key="2">
    <citation type="journal article" date="2012" name="Mol. Microbiol.">
        <title>The toxin/immunity network of Burkholderia pseudomallei contact-dependent growth inhibition (CDI) systems.</title>
        <authorList>
            <person name="Nikolakakis K."/>
            <person name="Amber S."/>
            <person name="Wilbur J.S."/>
            <person name="Diner E.J."/>
            <person name="Aoki S.K."/>
            <person name="Poole S.J."/>
            <person name="Tuanyok A."/>
            <person name="Keim P.S."/>
            <person name="Peacock S."/>
            <person name="Hayes C.S."/>
            <person name="Low D.A."/>
        </authorList>
    </citation>
    <scope>FUNCTION</scope>
    <scope>INTERACTION WITH CDIA</scope>
    <scope>SUBUNIT</scope>
    <scope>EXPRESSION IN E.COLI</scope>
    <source>
        <strain>1026b</strain>
    </source>
</reference>
<reference key="3">
    <citation type="journal article" date="2014" name="Mol. Microbiol.">
        <title>The proton-motive force is required for translocation of CDI toxins across the inner membrane of target bacteria.</title>
        <authorList>
            <person name="Ruhe Z.C."/>
            <person name="Nguyen J.Y."/>
            <person name="Beck C.M."/>
            <person name="Low D.A."/>
            <person name="Hayes C.S."/>
        </authorList>
    </citation>
    <scope>FUNCTION</scope>
    <source>
        <strain>1026b</strain>
    </source>
</reference>
<reference key="4">
    <citation type="journal article" date="2012" name="Proc. Natl. Acad. Sci. U.S.A.">
        <title>Structural basis of toxicity and immunity in contact-dependent growth inhibition (CDI) systems.</title>
        <authorList>
            <person name="Morse R.P."/>
            <person name="Nikolakakis K.C."/>
            <person name="Willett J.L."/>
            <person name="Gerrick E."/>
            <person name="Low D.A."/>
            <person name="Hayes C.S."/>
            <person name="Goulding C.W."/>
        </authorList>
    </citation>
    <scope>X-RAY CRYSTALLOGRAPHY (2.64 ANGSTROMS) IN COMPLEX WITH CDIA</scope>
    <scope>SUBUNIT</scope>
    <source>
        <strain>1026b</strain>
    </source>
</reference>
<dbReference type="EMBL" id="CP002834">
    <property type="status" value="NOT_ANNOTATED_CDS"/>
    <property type="molecule type" value="Genomic_DNA"/>
</dbReference>
<dbReference type="PDB" id="4G6V">
    <property type="method" value="X-ray"/>
    <property type="resolution" value="2.64 A"/>
    <property type="chains" value="B/D/F/H=1-101"/>
</dbReference>
<dbReference type="PDBsum" id="4G6V"/>
<dbReference type="SMR" id="P0DMJ7"/>
<dbReference type="Proteomes" id="UP000010087">
    <property type="component" value="Chromosome 2"/>
</dbReference>
<dbReference type="CDD" id="cd13443">
    <property type="entry name" value="CDI_inhibitor_Bp1026b_like"/>
    <property type="match status" value="1"/>
</dbReference>
<dbReference type="Gene3D" id="3.30.70.2920">
    <property type="match status" value="1"/>
</dbReference>
<dbReference type="InterPro" id="IPR053759">
    <property type="entry name" value="CDI_Immunity_Comp"/>
</dbReference>
<dbReference type="InterPro" id="IPR033805">
    <property type="entry name" value="CdiI_Bp1026b-like"/>
</dbReference>
<organism>
    <name type="scientific">Burkholderia pseudomallei (strain 1026b)</name>
    <dbReference type="NCBI Taxonomy" id="884204"/>
    <lineage>
        <taxon>Bacteria</taxon>
        <taxon>Pseudomonadati</taxon>
        <taxon>Pseudomonadota</taxon>
        <taxon>Betaproteobacteria</taxon>
        <taxon>Burkholderiales</taxon>
        <taxon>Burkholderiaceae</taxon>
        <taxon>Burkholderia</taxon>
        <taxon>pseudomallei group</taxon>
    </lineage>
</organism>
<name>CDII2_BURP2</name>
<evidence type="ECO:0000269" key="1">
    <source>
    </source>
</evidence>
<evidence type="ECO:0000269" key="2">
    <source>
    </source>
</evidence>
<evidence type="ECO:0000269" key="3">
    <source>
    </source>
</evidence>
<accession>P0DMJ7</accession>
<gene>
    <name type="primary">cdiI2</name>
    <name type="ordered locus">BP1026B_II2206.1</name>
</gene>
<sequence>MAIDLFCYLSIDRGAAESDLNKIRSNHSELFEGKFLISPVRDADFSLKEIAAEHGLVAESFFLVSLNDKNSADLIPIVSKILVDGFNGGAILILQDNEYRR</sequence>
<keyword id="KW-0002">3D-structure</keyword>
<protein>
    <recommendedName>
        <fullName>Immunity protein CdiI-2</fullName>
    </recommendedName>
    <alternativeName>
        <fullName>Immunity protein CdiI-II</fullName>
    </alternativeName>
</protein>
<comment type="function">
    <text evidence="1 3">Immunity protein component of a toxin-immunity protein module, which functions as a cellular contact-dependent growth inhibition (CDI) system. CDI modules allow bacteria to communicate with and inhibit the growth of closely related neighboring bacteria in a contact-dependent fashion. Neutralizes the toxic activity of cognate toxin CdiA (C-terminal 301 residue CT fragment) upon expression in E.coli. Does not inhibit toxic activity of CdiA from other strains of B.pseudomallei.</text>
</comment>
<comment type="function">
    <text evidence="1">Expression of this cdiAIB locus in B.thailandensis confers protection against other bacteria carrying the locus; growth inhibition requires cellular contact.</text>
</comment>
<comment type="subunit">
    <text evidence="1 2">Specifically interacts with the truncated CT fragment of cognate toxin protein CdiA-2, which inhibits CdiA-2 tRNA nuclease activity.</text>
</comment>
<feature type="chain" id="PRO_0000429694" description="Immunity protein CdiI-2">
    <location>
        <begin position="1"/>
        <end position="101"/>
    </location>
</feature>